<reference key="1">
    <citation type="journal article" date="2004" name="Nat. Biotechnol.">
        <title>The genome sequence of the anaerobic, sulfate-reducing bacterium Desulfovibrio vulgaris Hildenborough.</title>
        <authorList>
            <person name="Heidelberg J.F."/>
            <person name="Seshadri R."/>
            <person name="Haveman S.A."/>
            <person name="Hemme C.L."/>
            <person name="Paulsen I.T."/>
            <person name="Kolonay J.F."/>
            <person name="Eisen J.A."/>
            <person name="Ward N.L."/>
            <person name="Methe B.A."/>
            <person name="Brinkac L.M."/>
            <person name="Daugherty S.C."/>
            <person name="DeBoy R.T."/>
            <person name="Dodson R.J."/>
            <person name="Durkin A.S."/>
            <person name="Madupu R."/>
            <person name="Nelson W.C."/>
            <person name="Sullivan S.A."/>
            <person name="Fouts D.E."/>
            <person name="Haft D.H."/>
            <person name="Selengut J."/>
            <person name="Peterson J.D."/>
            <person name="Davidsen T.M."/>
            <person name="Zafar N."/>
            <person name="Zhou L."/>
            <person name="Radune D."/>
            <person name="Dimitrov G."/>
            <person name="Hance M."/>
            <person name="Tran K."/>
            <person name="Khouri H.M."/>
            <person name="Gill J."/>
            <person name="Utterback T.R."/>
            <person name="Feldblyum T.V."/>
            <person name="Wall J.D."/>
            <person name="Voordouw G."/>
            <person name="Fraser C.M."/>
        </authorList>
    </citation>
    <scope>NUCLEOTIDE SEQUENCE [LARGE SCALE GENOMIC DNA]</scope>
    <source>
        <strain>ATCC 29579 / DSM 644 / CCUG 34227 / NCIMB 8303 / VKM B-1760 / Hildenborough</strain>
    </source>
</reference>
<keyword id="KW-1003">Cell membrane</keyword>
<keyword id="KW-0472">Membrane</keyword>
<keyword id="KW-1185">Reference proteome</keyword>
<keyword id="KW-0812">Transmembrane</keyword>
<keyword id="KW-1133">Transmembrane helix</keyword>
<proteinExistence type="inferred from homology"/>
<dbReference type="EMBL" id="AE017285">
    <property type="protein sequence ID" value="AAS95025.1"/>
    <property type="molecule type" value="Genomic_DNA"/>
</dbReference>
<dbReference type="RefSeq" id="WP_010937849.1">
    <property type="nucleotide sequence ID" value="NC_002937.3"/>
</dbReference>
<dbReference type="RefSeq" id="YP_009766.1">
    <property type="nucleotide sequence ID" value="NC_002937.3"/>
</dbReference>
<dbReference type="STRING" id="882.DVU_0543"/>
<dbReference type="PaxDb" id="882-DVU_0543"/>
<dbReference type="EnsemblBacteria" id="AAS95025">
    <property type="protein sequence ID" value="AAS95025"/>
    <property type="gene ID" value="DVU_0543"/>
</dbReference>
<dbReference type="KEGG" id="dvu:DVU_0543"/>
<dbReference type="PATRIC" id="fig|882.5.peg.517"/>
<dbReference type="eggNOG" id="COG2855">
    <property type="taxonomic scope" value="Bacteria"/>
</dbReference>
<dbReference type="HOGENOM" id="CLU_033541_1_0_7"/>
<dbReference type="OrthoDB" id="5393513at2"/>
<dbReference type="PhylomeDB" id="Q72EN4"/>
<dbReference type="Proteomes" id="UP000002194">
    <property type="component" value="Chromosome"/>
</dbReference>
<dbReference type="GO" id="GO:0005886">
    <property type="term" value="C:plasma membrane"/>
    <property type="evidence" value="ECO:0007669"/>
    <property type="project" value="UniProtKB-SubCell"/>
</dbReference>
<dbReference type="InterPro" id="IPR018383">
    <property type="entry name" value="UPF0324_pro"/>
</dbReference>
<dbReference type="PANTHER" id="PTHR30106">
    <property type="entry name" value="INNER MEMBRANE PROTEIN YEIH-RELATED"/>
    <property type="match status" value="1"/>
</dbReference>
<dbReference type="PANTHER" id="PTHR30106:SF1">
    <property type="entry name" value="UPF0324 MEMBRANE PROTEIN FN0533"/>
    <property type="match status" value="1"/>
</dbReference>
<dbReference type="Pfam" id="PF03601">
    <property type="entry name" value="Cons_hypoth698"/>
    <property type="match status" value="1"/>
</dbReference>
<evidence type="ECO:0000255" key="1"/>
<evidence type="ECO:0000305" key="2"/>
<sequence length="369" mass="39520">MQEKGLAGKMMDIVPGLLVMVGTLYVLRTYVEPWMKDAVVFGRKGWLVQVLSLNYILLSILTGMFYRNILFGGKIPGWAEEGFRTTRLFIKTGVIMLGSLYTFDKLLKVGGVAITLIVAFVFGTAIFIMWLGSRLGADRSVTATMAAACGVCGVSAAVATAPGVRAKPVDLALSIATILGFGIMTMFVSPFIGKALQLSDYQFGAWVGTGILNSGQVLATCLAFNPVFAPGTAVAYGEIWNVVRVICIPFVVFFITAWYWKGEADAEHTSLGSILASKFPIFVLGFVGMTALSSLHMLGAEGSETLHLMRDVMAWIFGVGLVGLGAYIDVREIKAAGGVPLRIGLIAGMVKYILALIIILAFIPKEGAF</sequence>
<accession>Q72EN4</accession>
<comment type="subcellular location">
    <subcellularLocation>
        <location evidence="2">Cell membrane</location>
        <topology evidence="2">Multi-pass membrane protein</topology>
    </subcellularLocation>
</comment>
<comment type="similarity">
    <text evidence="2">Belongs to the UPF0324 family.</text>
</comment>
<gene>
    <name type="ordered locus">DVU_0543</name>
</gene>
<name>Y543_NITV2</name>
<feature type="chain" id="PRO_0000157411" description="UPF0324 membrane protein DVU_0543">
    <location>
        <begin position="1"/>
        <end position="369"/>
    </location>
</feature>
<feature type="transmembrane region" description="Helical" evidence="1">
    <location>
        <begin position="13"/>
        <end position="31"/>
    </location>
</feature>
<feature type="transmembrane region" description="Helical" evidence="1">
    <location>
        <begin position="46"/>
        <end position="65"/>
    </location>
</feature>
<feature type="transmembrane region" description="Helical" evidence="1">
    <location>
        <begin position="110"/>
        <end position="132"/>
    </location>
</feature>
<feature type="transmembrane region" description="Helical" evidence="1">
    <location>
        <begin position="142"/>
        <end position="164"/>
    </location>
</feature>
<feature type="transmembrane region" description="Helical" evidence="1">
    <location>
        <begin position="171"/>
        <end position="193"/>
    </location>
</feature>
<feature type="transmembrane region" description="Helical" evidence="1">
    <location>
        <begin position="240"/>
        <end position="262"/>
    </location>
</feature>
<feature type="transmembrane region" description="Helical" evidence="1">
    <location>
        <begin position="269"/>
        <end position="291"/>
    </location>
</feature>
<feature type="transmembrane region" description="Helical" evidence="1">
    <location>
        <begin position="306"/>
        <end position="328"/>
    </location>
</feature>
<feature type="transmembrane region" description="Helical" evidence="1">
    <location>
        <begin position="341"/>
        <end position="363"/>
    </location>
</feature>
<organism>
    <name type="scientific">Nitratidesulfovibrio vulgaris (strain ATCC 29579 / DSM 644 / CCUG 34227 / NCIMB 8303 / VKM B-1760 / Hildenborough)</name>
    <name type="common">Desulfovibrio vulgaris</name>
    <dbReference type="NCBI Taxonomy" id="882"/>
    <lineage>
        <taxon>Bacteria</taxon>
        <taxon>Pseudomonadati</taxon>
        <taxon>Thermodesulfobacteriota</taxon>
        <taxon>Desulfovibrionia</taxon>
        <taxon>Desulfovibrionales</taxon>
        <taxon>Desulfovibrionaceae</taxon>
        <taxon>Nitratidesulfovibrio</taxon>
    </lineage>
</organism>
<protein>
    <recommendedName>
        <fullName>UPF0324 membrane protein DVU_0543</fullName>
    </recommendedName>
</protein>